<dbReference type="EC" id="5.3.3.2" evidence="1"/>
<dbReference type="EMBL" id="CP000362">
    <property type="protein sequence ID" value="ABG29881.1"/>
    <property type="molecule type" value="Genomic_DNA"/>
</dbReference>
<dbReference type="RefSeq" id="WP_011566503.1">
    <property type="nucleotide sequence ID" value="NC_008209.1"/>
</dbReference>
<dbReference type="SMR" id="Q16DR2"/>
<dbReference type="STRING" id="375451.RD1_0147"/>
<dbReference type="KEGG" id="rde:RD1_0147"/>
<dbReference type="eggNOG" id="COG1443">
    <property type="taxonomic scope" value="Bacteria"/>
</dbReference>
<dbReference type="HOGENOM" id="CLU_060552_2_1_5"/>
<dbReference type="OrthoDB" id="9809458at2"/>
<dbReference type="UniPathway" id="UPA00059">
    <property type="reaction ID" value="UER00104"/>
</dbReference>
<dbReference type="UniPathway" id="UPA00668"/>
<dbReference type="Proteomes" id="UP000007029">
    <property type="component" value="Chromosome"/>
</dbReference>
<dbReference type="GO" id="GO:0005737">
    <property type="term" value="C:cytoplasm"/>
    <property type="evidence" value="ECO:0007669"/>
    <property type="project" value="UniProtKB-SubCell"/>
</dbReference>
<dbReference type="GO" id="GO:0004452">
    <property type="term" value="F:isopentenyl-diphosphate delta-isomerase activity"/>
    <property type="evidence" value="ECO:0007669"/>
    <property type="project" value="UniProtKB-UniRule"/>
</dbReference>
<dbReference type="GO" id="GO:0046872">
    <property type="term" value="F:metal ion binding"/>
    <property type="evidence" value="ECO:0007669"/>
    <property type="project" value="UniProtKB-KW"/>
</dbReference>
<dbReference type="GO" id="GO:0015995">
    <property type="term" value="P:chlorophyll biosynthetic process"/>
    <property type="evidence" value="ECO:0007669"/>
    <property type="project" value="UniProtKB-UniRule"/>
</dbReference>
<dbReference type="GO" id="GO:0050992">
    <property type="term" value="P:dimethylallyl diphosphate biosynthetic process"/>
    <property type="evidence" value="ECO:0007669"/>
    <property type="project" value="UniProtKB-UniRule"/>
</dbReference>
<dbReference type="GO" id="GO:0009240">
    <property type="term" value="P:isopentenyl diphosphate biosynthetic process"/>
    <property type="evidence" value="ECO:0007669"/>
    <property type="project" value="TreeGrafter"/>
</dbReference>
<dbReference type="GO" id="GO:0015979">
    <property type="term" value="P:photosynthesis"/>
    <property type="evidence" value="ECO:0007669"/>
    <property type="project" value="UniProtKB-UniRule"/>
</dbReference>
<dbReference type="CDD" id="cd02885">
    <property type="entry name" value="NUDIX_IPP_Isomerase"/>
    <property type="match status" value="1"/>
</dbReference>
<dbReference type="Gene3D" id="3.90.79.10">
    <property type="entry name" value="Nucleoside Triphosphate Pyrophosphohydrolase"/>
    <property type="match status" value="1"/>
</dbReference>
<dbReference type="HAMAP" id="MF_00202">
    <property type="entry name" value="Idi"/>
    <property type="match status" value="1"/>
</dbReference>
<dbReference type="InterPro" id="IPR056375">
    <property type="entry name" value="Idi_bact"/>
</dbReference>
<dbReference type="InterPro" id="IPR011876">
    <property type="entry name" value="IsopentenylPP_isomerase_typ1"/>
</dbReference>
<dbReference type="InterPro" id="IPR015797">
    <property type="entry name" value="NUDIX_hydrolase-like_dom_sf"/>
</dbReference>
<dbReference type="InterPro" id="IPR000086">
    <property type="entry name" value="NUDIX_hydrolase_dom"/>
</dbReference>
<dbReference type="NCBIfam" id="TIGR02150">
    <property type="entry name" value="IPP_isom_1"/>
    <property type="match status" value="1"/>
</dbReference>
<dbReference type="NCBIfam" id="NF002995">
    <property type="entry name" value="PRK03759.1"/>
    <property type="match status" value="1"/>
</dbReference>
<dbReference type="PANTHER" id="PTHR10885">
    <property type="entry name" value="ISOPENTENYL-DIPHOSPHATE DELTA-ISOMERASE"/>
    <property type="match status" value="1"/>
</dbReference>
<dbReference type="PANTHER" id="PTHR10885:SF0">
    <property type="entry name" value="ISOPENTENYL-DIPHOSPHATE DELTA-ISOMERASE"/>
    <property type="match status" value="1"/>
</dbReference>
<dbReference type="Pfam" id="PF00293">
    <property type="entry name" value="NUDIX"/>
    <property type="match status" value="1"/>
</dbReference>
<dbReference type="PIRSF" id="PIRSF018427">
    <property type="entry name" value="Isopntndiph_ism"/>
    <property type="match status" value="1"/>
</dbReference>
<dbReference type="SUPFAM" id="SSF55811">
    <property type="entry name" value="Nudix"/>
    <property type="match status" value="1"/>
</dbReference>
<dbReference type="PROSITE" id="PS51462">
    <property type="entry name" value="NUDIX"/>
    <property type="match status" value="1"/>
</dbReference>
<protein>
    <recommendedName>
        <fullName evidence="1">Isopentenyl-diphosphate Delta-isomerase</fullName>
        <shortName evidence="1">IPP isomerase</shortName>
        <ecNumber evidence="1">5.3.3.2</ecNumber>
    </recommendedName>
    <alternativeName>
        <fullName evidence="1">IPP:DMAPP isomerase</fullName>
    </alternativeName>
    <alternativeName>
        <fullName evidence="1">Isopentenyl pyrophosphate isomerase</fullName>
    </alternativeName>
</protein>
<reference key="1">
    <citation type="journal article" date="2007" name="J. Bacteriol.">
        <title>The complete genome sequence of Roseobacter denitrificans reveals a mixotrophic rather than photosynthetic metabolism.</title>
        <authorList>
            <person name="Swingley W.D."/>
            <person name="Sadekar S."/>
            <person name="Mastrian S.D."/>
            <person name="Matthies H.J."/>
            <person name="Hao J."/>
            <person name="Ramos H."/>
            <person name="Acharya C.R."/>
            <person name="Conrad A.L."/>
            <person name="Taylor H.L."/>
            <person name="Dejesa L.C."/>
            <person name="Shah M.K."/>
            <person name="O'Huallachain M.E."/>
            <person name="Lince M.T."/>
            <person name="Blankenship R.E."/>
            <person name="Beatty J.T."/>
            <person name="Touchman J.W."/>
        </authorList>
    </citation>
    <scope>NUCLEOTIDE SEQUENCE [LARGE SCALE GENOMIC DNA]</scope>
    <source>
        <strain>ATCC 33942 / OCh 114</strain>
    </source>
</reference>
<keyword id="KW-0149">Chlorophyll biosynthesis</keyword>
<keyword id="KW-0963">Cytoplasm</keyword>
<keyword id="KW-0413">Isomerase</keyword>
<keyword id="KW-0414">Isoprene biosynthesis</keyword>
<keyword id="KW-0460">Magnesium</keyword>
<keyword id="KW-0464">Manganese</keyword>
<keyword id="KW-0479">Metal-binding</keyword>
<keyword id="KW-0602">Photosynthesis</keyword>
<keyword id="KW-1185">Reference proteome</keyword>
<proteinExistence type="inferred from homology"/>
<name>IDI_ROSDO</name>
<feature type="chain" id="PRO_1000012176" description="Isopentenyl-diphosphate Delta-isomerase">
    <location>
        <begin position="1"/>
        <end position="176"/>
    </location>
</feature>
<feature type="domain" description="Nudix hydrolase">
    <location>
        <begin position="26"/>
        <end position="160"/>
    </location>
</feature>
<feature type="active site" evidence="1">
    <location>
        <position position="62"/>
    </location>
</feature>
<feature type="active site" evidence="1">
    <location>
        <position position="110"/>
    </location>
</feature>
<feature type="binding site" evidence="1">
    <location>
        <position position="22"/>
    </location>
    <ligand>
        <name>Mn(2+)</name>
        <dbReference type="ChEBI" id="CHEBI:29035"/>
    </ligand>
</feature>
<feature type="binding site" evidence="1">
    <location>
        <position position="28"/>
    </location>
    <ligand>
        <name>Mn(2+)</name>
        <dbReference type="ChEBI" id="CHEBI:29035"/>
    </ligand>
</feature>
<feature type="binding site" evidence="1">
    <location>
        <position position="64"/>
    </location>
    <ligand>
        <name>Mn(2+)</name>
        <dbReference type="ChEBI" id="CHEBI:29035"/>
    </ligand>
</feature>
<feature type="binding site" evidence="1">
    <location>
        <position position="82"/>
    </location>
    <ligand>
        <name>Mg(2+)</name>
        <dbReference type="ChEBI" id="CHEBI:18420"/>
    </ligand>
</feature>
<feature type="binding site" evidence="1">
    <location>
        <position position="108"/>
    </location>
    <ligand>
        <name>Mn(2+)</name>
        <dbReference type="ChEBI" id="CHEBI:29035"/>
    </ligand>
</feature>
<feature type="binding site" evidence="1">
    <location>
        <position position="110"/>
    </location>
    <ligand>
        <name>Mn(2+)</name>
        <dbReference type="ChEBI" id="CHEBI:29035"/>
    </ligand>
</feature>
<sequence length="176" mass="19991">MTIMIPAWVNGTLTSVEKLEAHVKGLRHKAVSVFVLKGDAVLMQQRAMCKYHTPGLWTNTCCTHPEWDEAPEVCAIRRLDEELGVRGLIPQHRHHLEYRADVGGGLIEHEVVDVFVAEADETLVVLPNPDEVMAVEWVHFDDLVDQVAQHPDRYTPWLRIYLRDHAATIFGELALL</sequence>
<comment type="function">
    <text evidence="1">Catalyzes the 1,3-allylic rearrangement of the homoallylic substrate isopentenyl (IPP) to its highly electrophilic allylic isomer, dimethylallyl diphosphate (DMAPP).</text>
</comment>
<comment type="catalytic activity">
    <reaction evidence="1">
        <text>isopentenyl diphosphate = dimethylallyl diphosphate</text>
        <dbReference type="Rhea" id="RHEA:23284"/>
        <dbReference type="ChEBI" id="CHEBI:57623"/>
        <dbReference type="ChEBI" id="CHEBI:128769"/>
        <dbReference type="EC" id="5.3.3.2"/>
    </reaction>
</comment>
<comment type="cofactor">
    <cofactor evidence="1">
        <name>Mg(2+)</name>
        <dbReference type="ChEBI" id="CHEBI:18420"/>
    </cofactor>
    <text evidence="1">Binds 1 Mg(2+) ion per subunit. The magnesium ion binds only when substrate is bound.</text>
</comment>
<comment type="cofactor">
    <cofactor evidence="1">
        <name>Mn(2+)</name>
        <dbReference type="ChEBI" id="CHEBI:29035"/>
    </cofactor>
    <text evidence="1">Binds 1 Mn(2+) ion per subunit.</text>
</comment>
<comment type="pathway">
    <text evidence="1">Isoprenoid biosynthesis; dimethylallyl diphosphate biosynthesis; dimethylallyl diphosphate from isopentenyl diphosphate: step 1/1.</text>
</comment>
<comment type="pathway">
    <text evidence="1">Porphyrin-containing compound metabolism; chlorophyll biosynthesis.</text>
</comment>
<comment type="subcellular location">
    <subcellularLocation>
        <location evidence="1">Cytoplasm</location>
    </subcellularLocation>
</comment>
<comment type="similarity">
    <text evidence="1">Belongs to the IPP isomerase type 1 family.</text>
</comment>
<organism>
    <name type="scientific">Roseobacter denitrificans (strain ATCC 33942 / OCh 114)</name>
    <name type="common">Erythrobacter sp. (strain OCh 114)</name>
    <name type="synonym">Roseobacter denitrificans</name>
    <dbReference type="NCBI Taxonomy" id="375451"/>
    <lineage>
        <taxon>Bacteria</taxon>
        <taxon>Pseudomonadati</taxon>
        <taxon>Pseudomonadota</taxon>
        <taxon>Alphaproteobacteria</taxon>
        <taxon>Rhodobacterales</taxon>
        <taxon>Roseobacteraceae</taxon>
        <taxon>Roseobacter</taxon>
    </lineage>
</organism>
<accession>Q16DR2</accession>
<evidence type="ECO:0000255" key="1">
    <source>
        <dbReference type="HAMAP-Rule" id="MF_00202"/>
    </source>
</evidence>
<gene>
    <name evidence="1" type="primary">idi</name>
    <name type="ordered locus">RD1_0147</name>
</gene>